<dbReference type="EMBL" id="BA000018">
    <property type="protein sequence ID" value="BAB43362.1"/>
    <property type="molecule type" value="Genomic_DNA"/>
</dbReference>
<dbReference type="RefSeq" id="WP_000866971.1">
    <property type="nucleotide sequence ID" value="NC_002745.2"/>
</dbReference>
<dbReference type="PDB" id="2Q5W">
    <property type="method" value="X-ray"/>
    <property type="resolution" value="2.00 A"/>
    <property type="chains" value="D=1-77"/>
</dbReference>
<dbReference type="PDB" id="2QIE">
    <property type="method" value="X-ray"/>
    <property type="resolution" value="2.50 A"/>
    <property type="chains" value="B/D/G/J=1-77"/>
</dbReference>
<dbReference type="PDBsum" id="2Q5W"/>
<dbReference type="PDBsum" id="2QIE"/>
<dbReference type="SMR" id="Q7A441"/>
<dbReference type="EnsemblBacteria" id="BAB43362">
    <property type="protein sequence ID" value="BAB43362"/>
    <property type="gene ID" value="BAB43362"/>
</dbReference>
<dbReference type="KEGG" id="sau:SA2065"/>
<dbReference type="HOGENOM" id="CLU_114601_4_1_9"/>
<dbReference type="UniPathway" id="UPA00344"/>
<dbReference type="EvolutionaryTrace" id="Q7A441"/>
<dbReference type="GO" id="GO:1990133">
    <property type="term" value="C:molybdopterin adenylyltransferase complex"/>
    <property type="evidence" value="ECO:0007669"/>
    <property type="project" value="TreeGrafter"/>
</dbReference>
<dbReference type="GO" id="GO:0000166">
    <property type="term" value="F:nucleotide binding"/>
    <property type="evidence" value="ECO:0007669"/>
    <property type="project" value="UniProtKB-KW"/>
</dbReference>
<dbReference type="GO" id="GO:0006777">
    <property type="term" value="P:Mo-molybdopterin cofactor biosynthetic process"/>
    <property type="evidence" value="ECO:0007669"/>
    <property type="project" value="UniProtKB-KW"/>
</dbReference>
<dbReference type="CDD" id="cd00754">
    <property type="entry name" value="Ubl_MoaD"/>
    <property type="match status" value="1"/>
</dbReference>
<dbReference type="FunFam" id="3.10.20.30:FF:000010">
    <property type="entry name" value="Molybdopterin synthase sulfur carrier subunit"/>
    <property type="match status" value="1"/>
</dbReference>
<dbReference type="Gene3D" id="3.10.20.30">
    <property type="match status" value="1"/>
</dbReference>
<dbReference type="InterPro" id="IPR012675">
    <property type="entry name" value="Beta-grasp_dom_sf"/>
</dbReference>
<dbReference type="InterPro" id="IPR044672">
    <property type="entry name" value="MOCS2A"/>
</dbReference>
<dbReference type="InterPro" id="IPR016155">
    <property type="entry name" value="Mopterin_synth/thiamin_S_b"/>
</dbReference>
<dbReference type="InterPro" id="IPR003749">
    <property type="entry name" value="ThiS/MoaD-like"/>
</dbReference>
<dbReference type="NCBIfam" id="TIGR01682">
    <property type="entry name" value="moaD"/>
    <property type="match status" value="1"/>
</dbReference>
<dbReference type="PANTHER" id="PTHR33359">
    <property type="entry name" value="MOLYBDOPTERIN SYNTHASE SULFUR CARRIER SUBUNIT"/>
    <property type="match status" value="1"/>
</dbReference>
<dbReference type="PANTHER" id="PTHR33359:SF1">
    <property type="entry name" value="MOLYBDOPTERIN SYNTHASE SULFUR CARRIER SUBUNIT"/>
    <property type="match status" value="1"/>
</dbReference>
<dbReference type="Pfam" id="PF02597">
    <property type="entry name" value="ThiS"/>
    <property type="match status" value="1"/>
</dbReference>
<dbReference type="SUPFAM" id="SSF54285">
    <property type="entry name" value="MoaD/ThiS"/>
    <property type="match status" value="1"/>
</dbReference>
<name>MOAD_STAAN</name>
<reference key="1">
    <citation type="journal article" date="2001" name="Lancet">
        <title>Whole genome sequencing of meticillin-resistant Staphylococcus aureus.</title>
        <authorList>
            <person name="Kuroda M."/>
            <person name="Ohta T."/>
            <person name="Uchiyama I."/>
            <person name="Baba T."/>
            <person name="Yuzawa H."/>
            <person name="Kobayashi I."/>
            <person name="Cui L."/>
            <person name="Oguchi A."/>
            <person name="Aoki K."/>
            <person name="Nagai Y."/>
            <person name="Lian J.-Q."/>
            <person name="Ito T."/>
            <person name="Kanamori M."/>
            <person name="Matsumaru H."/>
            <person name="Maruyama A."/>
            <person name="Murakami H."/>
            <person name="Hosoyama A."/>
            <person name="Mizutani-Ui Y."/>
            <person name="Takahashi N.K."/>
            <person name="Sawano T."/>
            <person name="Inoue R."/>
            <person name="Kaito C."/>
            <person name="Sekimizu K."/>
            <person name="Hirakawa H."/>
            <person name="Kuhara S."/>
            <person name="Goto S."/>
            <person name="Yabuzaki J."/>
            <person name="Kanehisa M."/>
            <person name="Yamashita A."/>
            <person name="Oshima K."/>
            <person name="Furuya K."/>
            <person name="Yoshino C."/>
            <person name="Shiba T."/>
            <person name="Hattori M."/>
            <person name="Ogasawara N."/>
            <person name="Hayashi H."/>
            <person name="Hiramatsu K."/>
        </authorList>
    </citation>
    <scope>NUCLEOTIDE SEQUENCE [LARGE SCALE GENOMIC DNA]</scope>
    <source>
        <strain>N315</strain>
    </source>
</reference>
<reference key="2">
    <citation type="journal article" date="2008" name="Biochemistry">
        <title>Crystal structure of a molybdopterin synthase-precursor Z complex: insight into its sulfur transfer mechanism and its role in molybdenum cofactor deficiency.</title>
        <authorList>
            <person name="Daniels J.N."/>
            <person name="Wuebbens M.M."/>
            <person name="Rajagopalan K.V."/>
            <person name="Schindelin H."/>
        </authorList>
    </citation>
    <scope>X-RAY CRYSTALLOGRAPHY (2.0 ANGSTROMS) IN COMPLEX WITH MOAE</scope>
    <scope>REACTION MECHANISM</scope>
</reference>
<reference key="3">
    <citation type="journal article" date="2008" name="Biochemistry">
        <authorList>
            <person name="Daniels J.N."/>
            <person name="Wuebbens M.M."/>
            <person name="Rajagopalan K.V."/>
            <person name="Schindelin H."/>
        </authorList>
    </citation>
    <scope>ERRATUM OF PUBMED:18092812</scope>
</reference>
<comment type="function">
    <text>Involved in sulfur transfer in the conversion of molybdopterin precursor Z to molybdopterin.</text>
</comment>
<comment type="pathway">
    <text>Cofactor biosynthesis; molybdopterin biosynthesis.</text>
</comment>
<comment type="subunit">
    <text evidence="1">Heterotetramer of 2 MoaD subunits and 2 MoaE subunits. Forms a stable heterotetrameric complex of 2 MoaD and 2 MoeB during adenylation of MoaD by MoeB. During catalysis MoaD shuttles between the two heterotetrameric complexes (By similarity).</text>
</comment>
<comment type="PTM">
    <text evidence="1">C-terminal thiocarboxylation occurs in 2 steps, it is first acyl-adenylated (-COAMP) by MoeB, then thiocarboxylated (-COSH) by IscS.</text>
</comment>
<comment type="similarity">
    <text evidence="2">Belongs to the MoaD family.</text>
</comment>
<organism>
    <name type="scientific">Staphylococcus aureus (strain N315)</name>
    <dbReference type="NCBI Taxonomy" id="158879"/>
    <lineage>
        <taxon>Bacteria</taxon>
        <taxon>Bacillati</taxon>
        <taxon>Bacillota</taxon>
        <taxon>Bacilli</taxon>
        <taxon>Bacillales</taxon>
        <taxon>Staphylococcaceae</taxon>
        <taxon>Staphylococcus</taxon>
    </lineage>
</organism>
<evidence type="ECO:0000250" key="1"/>
<evidence type="ECO:0000305" key="2"/>
<evidence type="ECO:0007829" key="3">
    <source>
        <dbReference type="PDB" id="2Q5W"/>
    </source>
</evidence>
<proteinExistence type="evidence at protein level"/>
<sequence>MKVLYFAEIKDILQKAQEDIVLEQALTVQQFEDLLFERYPQINNKKFQVAVNEEFVQKSDFIQPNDTVALIPPVSGG</sequence>
<gene>
    <name type="primary">moaD</name>
    <name type="ordered locus">SA2065</name>
</gene>
<accession>Q7A441</accession>
<protein>
    <recommendedName>
        <fullName>Molybdopterin synthase sulfur carrier subunit</fullName>
    </recommendedName>
    <alternativeName>
        <fullName>MPT synthase subunit 1</fullName>
    </alternativeName>
    <alternativeName>
        <fullName>Molybdenum cofactor biosynthesis protein D</fullName>
    </alternativeName>
    <alternativeName>
        <fullName>Molybdopterin-converting factor small subunit</fullName>
    </alternativeName>
    <alternativeName>
        <fullName>Molybdopterin-converting factor subunit 1</fullName>
    </alternativeName>
    <alternativeName>
        <fullName>Sulfur carrier protein MoaD</fullName>
    </alternativeName>
</protein>
<keyword id="KW-0002">3D-structure</keyword>
<keyword id="KW-0501">Molybdenum cofactor biosynthesis</keyword>
<keyword id="KW-0547">Nucleotide-binding</keyword>
<keyword id="KW-0597">Phosphoprotein</keyword>
<feature type="chain" id="PRO_0000392067" description="Molybdopterin synthase sulfur carrier subunit">
    <location>
        <begin position="1"/>
        <end position="77"/>
    </location>
</feature>
<feature type="modified residue" description="1-thioglycine; alternate" evidence="1">
    <location>
        <position position="77"/>
    </location>
</feature>
<feature type="modified residue" description="Glycyl adenylate; alternate" evidence="1">
    <location>
        <position position="77"/>
    </location>
</feature>
<feature type="strand" evidence="3">
    <location>
        <begin position="2"/>
        <end position="4"/>
    </location>
</feature>
<feature type="helix" evidence="3">
    <location>
        <begin position="7"/>
        <end position="13"/>
    </location>
</feature>
<feature type="strand" evidence="3">
    <location>
        <begin position="16"/>
        <end position="19"/>
    </location>
</feature>
<feature type="helix" evidence="3">
    <location>
        <begin position="28"/>
        <end position="38"/>
    </location>
</feature>
<feature type="helix" evidence="3">
    <location>
        <begin position="40"/>
        <end position="42"/>
    </location>
</feature>
<feature type="strand" evidence="3">
    <location>
        <begin position="48"/>
        <end position="51"/>
    </location>
</feature>
<feature type="strand" evidence="3">
    <location>
        <begin position="54"/>
        <end position="56"/>
    </location>
</feature>
<feature type="strand" evidence="3">
    <location>
        <begin position="60"/>
        <end position="62"/>
    </location>
</feature>
<feature type="strand" evidence="3">
    <location>
        <begin position="67"/>
        <end position="71"/>
    </location>
</feature>